<proteinExistence type="inferred from homology"/>
<sequence>MAKTIRLTTAQALVKFLNAQYLHADGKEEPFVEGIFTIFGHGNVLGIGQALEQDAGRLNVWQGKNEQGMAHAAMAFSKQMLRKKIYAVTTSVGPGAANLVAAAGTALANNIPVLLLPADTFATRQPDPVLQQFEQEYSQAVTTNDALKPVSRYWDRITRPEQLMSSLIRAFEVMTDPGKAGPATICIAQDVEGEAYEYPEEFFRKRIHYLERRKPTEREIEEALERIRRSKRPLLVVGGGAKYSEAKEELVALSEQCGIPLVETQAGKATVAADFANNLGGLGVTGTLAANKAAREADLVIGVGTRYTDFATSSKTAFDFEHTTFLNINVSRMQTYKLDAYQVVADAKETLSLLISRLKTYRSAFGDRIAALKEEWLAERNRLKSVVFNRKTFVPEVKEHFSQEKLNEYADALGTELPQTTALLAINETIDEDSTIICSSGSLPGDLQRLWHANEPNTYHLEYGYSCMGYEISGALGIKLAEPEREVYSIVGDGSFLMLHSELITAIQYNKKINILLFDNAGFGCISNLQMDHGGGSYYCEFLTADNQVMNIDYAKVAEGYGAKTYRANTVEQLKAALKDAKKQETSTLIEMKVLPKTMTDGYESWWNVGVAEVAASQSIQDAYQARQAKLKEAKHY</sequence>
<dbReference type="EC" id="3.7.1.22" evidence="1"/>
<dbReference type="EMBL" id="AP006627">
    <property type="protein sequence ID" value="BAD62967.1"/>
    <property type="molecule type" value="Genomic_DNA"/>
</dbReference>
<dbReference type="RefSeq" id="WP_011245286.1">
    <property type="nucleotide sequence ID" value="NC_006582.1"/>
</dbReference>
<dbReference type="SMR" id="Q5WKY8"/>
<dbReference type="STRING" id="66692.ABC0425"/>
<dbReference type="KEGG" id="bcl:ABC0425"/>
<dbReference type="eggNOG" id="COG3962">
    <property type="taxonomic scope" value="Bacteria"/>
</dbReference>
<dbReference type="HOGENOM" id="CLU_013748_6_0_9"/>
<dbReference type="OrthoDB" id="4494979at2"/>
<dbReference type="UniPathway" id="UPA00076">
    <property type="reaction ID" value="UER00145"/>
</dbReference>
<dbReference type="Proteomes" id="UP000001168">
    <property type="component" value="Chromosome"/>
</dbReference>
<dbReference type="GO" id="GO:0005948">
    <property type="term" value="C:acetolactate synthase complex"/>
    <property type="evidence" value="ECO:0007669"/>
    <property type="project" value="TreeGrafter"/>
</dbReference>
<dbReference type="GO" id="GO:0102481">
    <property type="term" value="F:3D-(3,5/4)-trihydroxycyclohexane-1,2-dione hydrolase activity"/>
    <property type="evidence" value="ECO:0007669"/>
    <property type="project" value="UniProtKB-EC"/>
</dbReference>
<dbReference type="GO" id="GO:0003984">
    <property type="term" value="F:acetolactate synthase activity"/>
    <property type="evidence" value="ECO:0007669"/>
    <property type="project" value="TreeGrafter"/>
</dbReference>
<dbReference type="GO" id="GO:0050660">
    <property type="term" value="F:flavin adenine dinucleotide binding"/>
    <property type="evidence" value="ECO:0007669"/>
    <property type="project" value="TreeGrafter"/>
</dbReference>
<dbReference type="GO" id="GO:0000287">
    <property type="term" value="F:magnesium ion binding"/>
    <property type="evidence" value="ECO:0007669"/>
    <property type="project" value="UniProtKB-UniRule"/>
</dbReference>
<dbReference type="GO" id="GO:0030976">
    <property type="term" value="F:thiamine pyrophosphate binding"/>
    <property type="evidence" value="ECO:0007669"/>
    <property type="project" value="UniProtKB-UniRule"/>
</dbReference>
<dbReference type="GO" id="GO:0019310">
    <property type="term" value="P:inositol catabolic process"/>
    <property type="evidence" value="ECO:0007669"/>
    <property type="project" value="UniProtKB-UniRule"/>
</dbReference>
<dbReference type="GO" id="GO:0009097">
    <property type="term" value="P:isoleucine biosynthetic process"/>
    <property type="evidence" value="ECO:0007669"/>
    <property type="project" value="TreeGrafter"/>
</dbReference>
<dbReference type="GO" id="GO:0009099">
    <property type="term" value="P:L-valine biosynthetic process"/>
    <property type="evidence" value="ECO:0007669"/>
    <property type="project" value="TreeGrafter"/>
</dbReference>
<dbReference type="CDD" id="cd02003">
    <property type="entry name" value="TPP_IolD"/>
    <property type="match status" value="1"/>
</dbReference>
<dbReference type="CDD" id="cd07035">
    <property type="entry name" value="TPP_PYR_POX_like"/>
    <property type="match status" value="1"/>
</dbReference>
<dbReference type="Gene3D" id="3.40.50.970">
    <property type="match status" value="2"/>
</dbReference>
<dbReference type="Gene3D" id="3.40.50.1220">
    <property type="entry name" value="TPP-binding domain"/>
    <property type="match status" value="1"/>
</dbReference>
<dbReference type="HAMAP" id="MF_01669">
    <property type="entry name" value="IolD"/>
    <property type="match status" value="1"/>
</dbReference>
<dbReference type="InterPro" id="IPR029035">
    <property type="entry name" value="DHS-like_NAD/FAD-binding_dom"/>
</dbReference>
<dbReference type="InterPro" id="IPR030817">
    <property type="entry name" value="Myo_inos_IolD"/>
</dbReference>
<dbReference type="InterPro" id="IPR023757">
    <property type="entry name" value="THcHDO_hydrolase_firmi"/>
</dbReference>
<dbReference type="InterPro" id="IPR029061">
    <property type="entry name" value="THDP-binding"/>
</dbReference>
<dbReference type="InterPro" id="IPR012000">
    <property type="entry name" value="Thiamin_PyroP_enz_cen_dom"/>
</dbReference>
<dbReference type="InterPro" id="IPR012001">
    <property type="entry name" value="Thiamin_PyroP_enz_TPP-bd_dom"/>
</dbReference>
<dbReference type="InterPro" id="IPR000399">
    <property type="entry name" value="TPP-bd_CS"/>
</dbReference>
<dbReference type="InterPro" id="IPR045229">
    <property type="entry name" value="TPP_enz"/>
</dbReference>
<dbReference type="InterPro" id="IPR011766">
    <property type="entry name" value="TPP_enzyme_TPP-bd"/>
</dbReference>
<dbReference type="NCBIfam" id="TIGR04377">
    <property type="entry name" value="myo_inos_iolD"/>
    <property type="match status" value="1"/>
</dbReference>
<dbReference type="PANTHER" id="PTHR18968:SF9">
    <property type="entry name" value="3D-(3,5_4)-TRIHYDROXYCYCLOHEXANE-1,2-DIONE HYDROLASE"/>
    <property type="match status" value="1"/>
</dbReference>
<dbReference type="PANTHER" id="PTHR18968">
    <property type="entry name" value="THIAMINE PYROPHOSPHATE ENZYMES"/>
    <property type="match status" value="1"/>
</dbReference>
<dbReference type="Pfam" id="PF02775">
    <property type="entry name" value="TPP_enzyme_C"/>
    <property type="match status" value="1"/>
</dbReference>
<dbReference type="Pfam" id="PF00205">
    <property type="entry name" value="TPP_enzyme_M"/>
    <property type="match status" value="1"/>
</dbReference>
<dbReference type="Pfam" id="PF02776">
    <property type="entry name" value="TPP_enzyme_N"/>
    <property type="match status" value="1"/>
</dbReference>
<dbReference type="SUPFAM" id="SSF52467">
    <property type="entry name" value="DHS-like NAD/FAD-binding domain"/>
    <property type="match status" value="1"/>
</dbReference>
<dbReference type="SUPFAM" id="SSF52518">
    <property type="entry name" value="Thiamin diphosphate-binding fold (THDP-binding)"/>
    <property type="match status" value="2"/>
</dbReference>
<dbReference type="PROSITE" id="PS00187">
    <property type="entry name" value="TPP_ENZYMES"/>
    <property type="match status" value="1"/>
</dbReference>
<name>IOLD_SHOC1</name>
<feature type="chain" id="PRO_0000352532" description="3D-(3,5/4)-trihydroxycyclohexane-1,2-dione hydrolase">
    <location>
        <begin position="1"/>
        <end position="637"/>
    </location>
</feature>
<feature type="region of interest" description="Thiamine pyrophosphate binding" evidence="1">
    <location>
        <begin position="442"/>
        <end position="522"/>
    </location>
</feature>
<feature type="binding site" evidence="1">
    <location>
        <position position="66"/>
    </location>
    <ligand>
        <name>thiamine diphosphate</name>
        <dbReference type="ChEBI" id="CHEBI:58937"/>
    </ligand>
</feature>
<feature type="binding site" evidence="1">
    <location>
        <position position="493"/>
    </location>
    <ligand>
        <name>Mg(2+)</name>
        <dbReference type="ChEBI" id="CHEBI:18420"/>
    </ligand>
</feature>
<feature type="binding site" evidence="1">
    <location>
        <position position="520"/>
    </location>
    <ligand>
        <name>Mg(2+)</name>
        <dbReference type="ChEBI" id="CHEBI:18420"/>
    </ligand>
</feature>
<accession>Q5WKY8</accession>
<keyword id="KW-0378">Hydrolase</keyword>
<keyword id="KW-0460">Magnesium</keyword>
<keyword id="KW-0479">Metal-binding</keyword>
<keyword id="KW-0520">NAD</keyword>
<keyword id="KW-1185">Reference proteome</keyword>
<keyword id="KW-0786">Thiamine pyrophosphate</keyword>
<reference key="1">
    <citation type="submission" date="2003-10" db="EMBL/GenBank/DDBJ databases">
        <title>The complete genome sequence of the alkaliphilic Bacillus clausii KSM-K16.</title>
        <authorList>
            <person name="Takaki Y."/>
            <person name="Kageyama Y."/>
            <person name="Shimamura S."/>
            <person name="Suzuki H."/>
            <person name="Nishi S."/>
            <person name="Hatada Y."/>
            <person name="Kawai S."/>
            <person name="Ito S."/>
            <person name="Horikoshi K."/>
        </authorList>
    </citation>
    <scope>NUCLEOTIDE SEQUENCE [LARGE SCALE GENOMIC DNA]</scope>
    <source>
        <strain>KSM-K16</strain>
    </source>
</reference>
<comment type="function">
    <text evidence="1">Involved in the cleavage of the C1-C2 bond of 3D-(3,5/4)-trihydroxycyclohexane-1,2-dione (THcHDO) to yield 5-deoxy-glucuronate (5DG).</text>
</comment>
<comment type="catalytic activity">
    <reaction evidence="1">
        <text>3D-3,5/4-trihydroxycyclohexane-1,2-dione + H2O = 5-deoxy-D-glucuronate + H(+)</text>
        <dbReference type="Rhea" id="RHEA:25836"/>
        <dbReference type="ChEBI" id="CHEBI:15377"/>
        <dbReference type="ChEBI" id="CHEBI:15378"/>
        <dbReference type="ChEBI" id="CHEBI:28446"/>
        <dbReference type="ChEBI" id="CHEBI:58852"/>
        <dbReference type="EC" id="3.7.1.22"/>
    </reaction>
</comment>
<comment type="cofactor">
    <cofactor evidence="1">
        <name>Mg(2+)</name>
        <dbReference type="ChEBI" id="CHEBI:18420"/>
    </cofactor>
    <text evidence="1">Binds 1 Mg(2+) ion per subunit.</text>
</comment>
<comment type="cofactor">
    <cofactor evidence="1">
        <name>thiamine diphosphate</name>
        <dbReference type="ChEBI" id="CHEBI:58937"/>
    </cofactor>
    <text evidence="1">Binds 1 thiamine pyrophosphate per subunit.</text>
</comment>
<comment type="pathway">
    <text evidence="1">Polyol metabolism; myo-inositol degradation into acetyl-CoA; acetyl-CoA from myo-inositol: step 3/7.</text>
</comment>
<comment type="similarity">
    <text evidence="1">Belongs to the TPP enzyme family.</text>
</comment>
<protein>
    <recommendedName>
        <fullName evidence="1">3D-(3,5/4)-trihydroxycyclohexane-1,2-dione hydrolase</fullName>
        <shortName evidence="1">THcHDO hydrolase</shortName>
        <ecNumber evidence="1">3.7.1.22</ecNumber>
    </recommendedName>
</protein>
<organism>
    <name type="scientific">Shouchella clausii (strain KSM-K16)</name>
    <name type="common">Alkalihalobacillus clausii</name>
    <dbReference type="NCBI Taxonomy" id="66692"/>
    <lineage>
        <taxon>Bacteria</taxon>
        <taxon>Bacillati</taxon>
        <taxon>Bacillota</taxon>
        <taxon>Bacilli</taxon>
        <taxon>Bacillales</taxon>
        <taxon>Bacillaceae</taxon>
        <taxon>Shouchella</taxon>
    </lineage>
</organism>
<gene>
    <name evidence="1" type="primary">iolD</name>
    <name type="ordered locus">ABC0425</name>
</gene>
<evidence type="ECO:0000255" key="1">
    <source>
        <dbReference type="HAMAP-Rule" id="MF_01669"/>
    </source>
</evidence>